<proteinExistence type="predicted"/>
<dbReference type="EMBL" id="U70737">
    <property type="protein sequence ID" value="AAC49663.1"/>
    <property type="molecule type" value="Genomic_DNA"/>
</dbReference>
<dbReference type="EMBL" id="CU329672">
    <property type="protein sequence ID" value="CAA19120.2"/>
    <property type="molecule type" value="Genomic_DNA"/>
</dbReference>
<dbReference type="PIR" id="T41350">
    <property type="entry name" value="T41350"/>
</dbReference>
<dbReference type="RefSeq" id="NP_588108.3">
    <property type="nucleotide sequence ID" value="NM_001023099.3"/>
</dbReference>
<dbReference type="SMR" id="Q92380"/>
<dbReference type="BioGRID" id="275433">
    <property type="interactions" value="29"/>
</dbReference>
<dbReference type="FunCoup" id="Q92380">
    <property type="interactions" value="20"/>
</dbReference>
<dbReference type="STRING" id="284812.Q92380"/>
<dbReference type="iPTMnet" id="Q92380"/>
<dbReference type="SwissPalm" id="Q92380"/>
<dbReference type="PaxDb" id="4896-SPCC4E9.01c.1"/>
<dbReference type="EnsemblFungi" id="SPCC4E9.01c.1">
    <property type="protein sequence ID" value="SPCC4E9.01c.1:pep"/>
    <property type="gene ID" value="SPCC4E9.01c"/>
</dbReference>
<dbReference type="GeneID" id="2538852"/>
<dbReference type="KEGG" id="spo:2538852"/>
<dbReference type="PomBase" id="SPCC4E9.01c">
    <property type="gene designation" value="rec11"/>
</dbReference>
<dbReference type="VEuPathDB" id="FungiDB:SPCC4E9.01c"/>
<dbReference type="eggNOG" id="KOG2011">
    <property type="taxonomic scope" value="Eukaryota"/>
</dbReference>
<dbReference type="HOGENOM" id="CLU_316210_0_0_1"/>
<dbReference type="InParanoid" id="Q92380"/>
<dbReference type="OMA" id="EICRYDI"/>
<dbReference type="PhylomeDB" id="Q92380"/>
<dbReference type="Reactome" id="R-SPO-2470946">
    <property type="pathway name" value="Cohesin Loading onto Chromatin"/>
</dbReference>
<dbReference type="Reactome" id="R-SPO-2500257">
    <property type="pathway name" value="Resolution of Sister Chromatid Cohesion"/>
</dbReference>
<dbReference type="Reactome" id="R-SPO-3108214">
    <property type="pathway name" value="SUMOylation of DNA damage response and repair proteins"/>
</dbReference>
<dbReference type="PRO" id="PR:Q92380"/>
<dbReference type="Proteomes" id="UP000002485">
    <property type="component" value="Chromosome III"/>
</dbReference>
<dbReference type="GO" id="GO:0000785">
    <property type="term" value="C:chromatin"/>
    <property type="evidence" value="ECO:0000314"/>
    <property type="project" value="PomBase"/>
</dbReference>
<dbReference type="GO" id="GO:0008278">
    <property type="term" value="C:cohesin complex"/>
    <property type="evidence" value="ECO:0000318"/>
    <property type="project" value="GO_Central"/>
</dbReference>
<dbReference type="GO" id="GO:0000793">
    <property type="term" value="C:condensed chromosome"/>
    <property type="evidence" value="ECO:0000314"/>
    <property type="project" value="PomBase"/>
</dbReference>
<dbReference type="GO" id="GO:0030893">
    <property type="term" value="C:meiotic cohesin complex"/>
    <property type="evidence" value="ECO:0000314"/>
    <property type="project" value="PomBase"/>
</dbReference>
<dbReference type="GO" id="GO:0005634">
    <property type="term" value="C:nucleus"/>
    <property type="evidence" value="ECO:0000314"/>
    <property type="project" value="PomBase"/>
</dbReference>
<dbReference type="GO" id="GO:0003682">
    <property type="term" value="F:chromatin binding"/>
    <property type="evidence" value="ECO:0000318"/>
    <property type="project" value="GO_Central"/>
</dbReference>
<dbReference type="GO" id="GO:0031619">
    <property type="term" value="P:homologous chromosome orientation in meiotic metaphase I"/>
    <property type="evidence" value="ECO:0000315"/>
    <property type="project" value="PomBase"/>
</dbReference>
<dbReference type="GO" id="GO:0030999">
    <property type="term" value="P:linear element assembly"/>
    <property type="evidence" value="ECO:0000315"/>
    <property type="project" value="PomBase"/>
</dbReference>
<dbReference type="GO" id="GO:0051177">
    <property type="term" value="P:meiotic sister chromatid cohesion"/>
    <property type="evidence" value="ECO:0000314"/>
    <property type="project" value="PomBase"/>
</dbReference>
<dbReference type="GO" id="GO:0010789">
    <property type="term" value="P:meiotic sister chromatid cohesion involved in meiosis I"/>
    <property type="evidence" value="ECO:0000315"/>
    <property type="project" value="PomBase"/>
</dbReference>
<dbReference type="GO" id="GO:0007062">
    <property type="term" value="P:sister chromatid cohesion"/>
    <property type="evidence" value="ECO:0000318"/>
    <property type="project" value="GO_Central"/>
</dbReference>
<dbReference type="Gene3D" id="1.25.10.10">
    <property type="entry name" value="Leucine-rich Repeat Variant"/>
    <property type="match status" value="1"/>
</dbReference>
<dbReference type="InterPro" id="IPR011989">
    <property type="entry name" value="ARM-like"/>
</dbReference>
<dbReference type="InterPro" id="IPR016024">
    <property type="entry name" value="ARM-type_fold"/>
</dbReference>
<dbReference type="InterPro" id="IPR039662">
    <property type="entry name" value="Cohesin_Scc3/SA"/>
</dbReference>
<dbReference type="InterPro" id="IPR020839">
    <property type="entry name" value="SCD"/>
</dbReference>
<dbReference type="InterPro" id="IPR013721">
    <property type="entry name" value="STAG"/>
</dbReference>
<dbReference type="PANTHER" id="PTHR11199:SF0">
    <property type="entry name" value="LD34181P-RELATED"/>
    <property type="match status" value="1"/>
</dbReference>
<dbReference type="PANTHER" id="PTHR11199">
    <property type="entry name" value="STROMAL ANTIGEN"/>
    <property type="match status" value="1"/>
</dbReference>
<dbReference type="Pfam" id="PF21581">
    <property type="entry name" value="SCD"/>
    <property type="match status" value="1"/>
</dbReference>
<dbReference type="Pfam" id="PF08514">
    <property type="entry name" value="STAG"/>
    <property type="match status" value="1"/>
</dbReference>
<dbReference type="SUPFAM" id="SSF48371">
    <property type="entry name" value="ARM repeat"/>
    <property type="match status" value="1"/>
</dbReference>
<dbReference type="PROSITE" id="PS51425">
    <property type="entry name" value="SCD"/>
    <property type="match status" value="1"/>
</dbReference>
<keyword id="KW-0469">Meiosis</keyword>
<keyword id="KW-1185">Reference proteome</keyword>
<organism>
    <name type="scientific">Schizosaccharomyces pombe (strain 972 / ATCC 24843)</name>
    <name type="common">Fission yeast</name>
    <dbReference type="NCBI Taxonomy" id="284812"/>
    <lineage>
        <taxon>Eukaryota</taxon>
        <taxon>Fungi</taxon>
        <taxon>Dikarya</taxon>
        <taxon>Ascomycota</taxon>
        <taxon>Taphrinomycotina</taxon>
        <taxon>Schizosaccharomycetes</taxon>
        <taxon>Schizosaccharomycetales</taxon>
        <taxon>Schizosaccharomycetaceae</taxon>
        <taxon>Schizosaccharomyces</taxon>
    </lineage>
</organism>
<protein>
    <recommendedName>
        <fullName>Meiotic recombination protein rec11</fullName>
    </recommendedName>
</protein>
<reference key="1">
    <citation type="journal article" date="1997" name="Mol. Microbiol.">
        <title>Region-specific meiotic recombination in Schizosaccharomyces pombe: the rec11 gene.</title>
        <authorList>
            <person name="Li Y.F."/>
            <person name="Numata M."/>
            <person name="Wahls W.P."/>
            <person name="Smith G.R."/>
        </authorList>
    </citation>
    <scope>NUCLEOTIDE SEQUENCE [GENOMIC DNA]</scope>
</reference>
<reference key="2">
    <citation type="journal article" date="2002" name="Nature">
        <title>The genome sequence of Schizosaccharomyces pombe.</title>
        <authorList>
            <person name="Wood V."/>
            <person name="Gwilliam R."/>
            <person name="Rajandream M.A."/>
            <person name="Lyne M.H."/>
            <person name="Lyne R."/>
            <person name="Stewart A."/>
            <person name="Sgouros J.G."/>
            <person name="Peat N."/>
            <person name="Hayles J."/>
            <person name="Baker S.G."/>
            <person name="Basham D."/>
            <person name="Bowman S."/>
            <person name="Brooks K."/>
            <person name="Brown D."/>
            <person name="Brown S."/>
            <person name="Chillingworth T."/>
            <person name="Churcher C.M."/>
            <person name="Collins M."/>
            <person name="Connor R."/>
            <person name="Cronin A."/>
            <person name="Davis P."/>
            <person name="Feltwell T."/>
            <person name="Fraser A."/>
            <person name="Gentles S."/>
            <person name="Goble A."/>
            <person name="Hamlin N."/>
            <person name="Harris D.E."/>
            <person name="Hidalgo J."/>
            <person name="Hodgson G."/>
            <person name="Holroyd S."/>
            <person name="Hornsby T."/>
            <person name="Howarth S."/>
            <person name="Huckle E.J."/>
            <person name="Hunt S."/>
            <person name="Jagels K."/>
            <person name="James K.D."/>
            <person name="Jones L."/>
            <person name="Jones M."/>
            <person name="Leather S."/>
            <person name="McDonald S."/>
            <person name="McLean J."/>
            <person name="Mooney P."/>
            <person name="Moule S."/>
            <person name="Mungall K.L."/>
            <person name="Murphy L.D."/>
            <person name="Niblett D."/>
            <person name="Odell C."/>
            <person name="Oliver K."/>
            <person name="O'Neil S."/>
            <person name="Pearson D."/>
            <person name="Quail M.A."/>
            <person name="Rabbinowitsch E."/>
            <person name="Rutherford K.M."/>
            <person name="Rutter S."/>
            <person name="Saunders D."/>
            <person name="Seeger K."/>
            <person name="Sharp S."/>
            <person name="Skelton J."/>
            <person name="Simmonds M.N."/>
            <person name="Squares R."/>
            <person name="Squares S."/>
            <person name="Stevens K."/>
            <person name="Taylor K."/>
            <person name="Taylor R.G."/>
            <person name="Tivey A."/>
            <person name="Walsh S.V."/>
            <person name="Warren T."/>
            <person name="Whitehead S."/>
            <person name="Woodward J.R."/>
            <person name="Volckaert G."/>
            <person name="Aert R."/>
            <person name="Robben J."/>
            <person name="Grymonprez B."/>
            <person name="Weltjens I."/>
            <person name="Vanstreels E."/>
            <person name="Rieger M."/>
            <person name="Schaefer M."/>
            <person name="Mueller-Auer S."/>
            <person name="Gabel C."/>
            <person name="Fuchs M."/>
            <person name="Duesterhoeft A."/>
            <person name="Fritzc C."/>
            <person name="Holzer E."/>
            <person name="Moestl D."/>
            <person name="Hilbert H."/>
            <person name="Borzym K."/>
            <person name="Langer I."/>
            <person name="Beck A."/>
            <person name="Lehrach H."/>
            <person name="Reinhardt R."/>
            <person name="Pohl T.M."/>
            <person name="Eger P."/>
            <person name="Zimmermann W."/>
            <person name="Wedler H."/>
            <person name="Wambutt R."/>
            <person name="Purnelle B."/>
            <person name="Goffeau A."/>
            <person name="Cadieu E."/>
            <person name="Dreano S."/>
            <person name="Gloux S."/>
            <person name="Lelaure V."/>
            <person name="Mottier S."/>
            <person name="Galibert F."/>
            <person name="Aves S.J."/>
            <person name="Xiang Z."/>
            <person name="Hunt C."/>
            <person name="Moore K."/>
            <person name="Hurst S.M."/>
            <person name="Lucas M."/>
            <person name="Rochet M."/>
            <person name="Gaillardin C."/>
            <person name="Tallada V.A."/>
            <person name="Garzon A."/>
            <person name="Thode G."/>
            <person name="Daga R.R."/>
            <person name="Cruzado L."/>
            <person name="Jimenez J."/>
            <person name="Sanchez M."/>
            <person name="del Rey F."/>
            <person name="Benito J."/>
            <person name="Dominguez A."/>
            <person name="Revuelta J.L."/>
            <person name="Moreno S."/>
            <person name="Armstrong J."/>
            <person name="Forsburg S.L."/>
            <person name="Cerutti L."/>
            <person name="Lowe T."/>
            <person name="McCombie W.R."/>
            <person name="Paulsen I."/>
            <person name="Potashkin J."/>
            <person name="Shpakovski G.V."/>
            <person name="Ussery D."/>
            <person name="Barrell B.G."/>
            <person name="Nurse P."/>
        </authorList>
    </citation>
    <scope>NUCLEOTIDE SEQUENCE [LARGE SCALE GENOMIC DNA]</scope>
    <source>
        <strain>972 / ATCC 24843</strain>
    </source>
</reference>
<sequence>MRFEFESDASSHLNEVLTELESVELENVEYEGPSLQNVSICASPSEKKRKWGTQDEFSLTENEENNEIETNEEMHVNSHDYAFPQEFFLKLLDIDMPLEQLSQHYFEDYKSNSADFMLTFINFALVASGCQPFVTNFDVQDVDSIPETLSQVNRSSFQKSSCAYTDYLYTSNSKEAKTVRIRFQLFLVEFISKVYVEDAFLGDSFMETTKAWIFTMTTSPWMLVRHTATTICCDIMRCLCLIVNKLSEKSNQTAEILVLRDLTSRFIDMIHDICDSVLFSRIHDIRASIRIVCVTALYDCCQLLPTYLINRNLIRHSGWGLSDAESQIRKISLKIIDYLSSHEPEKDQDFVVDFLDRFSLRIVEICRYDIDSVRSVALKTCEKLMEKISLNGKCINIVSSCIFDGKPQNRISTMRILVAHTNERYANYCEAKTATISLSKLLRREKIPLLVSSFESLFKMNALLFILEQGFESWFRDSSDHIFSRVKDDDKFVYQSQENNFYDADFIREYDMNNHRQQLIEESMHSIHTNSQLLASWEDVAKLLLYDRFDAKDTNSVLNPCIPSNAVIEFSSIYLHYFATHISKRSKKPGKRLEDEVVNQQQAMLRNLPLLLQKYRESCVSSYFFIKCVEQIPDELLYKREFHKDFSKLYKEILDIFNSTTVNFLMILCSRFFHRLAVNKVVQEDILFAIDNVYNDLAESLHEQLNAYIQRKKINKKNQLNGNDETQNLVLALNKFGCFAKEMVCLRDVNDWNIKLSEKLCEICSLEVGPIVCYSSLKVLFLLLLSDMRDRNCIFTNIFLKAAKVAKQKNGNSFLSKVFITITMLTLFLGSKANNWDINFSDDDLKLMNEEEIMEQIETFKAWSMKFKEKSSGNPSYFFSPEDTEEKELWNNLFEDWYPNRARDPGTLSHLVKGLKETADHLS</sequence>
<feature type="chain" id="PRO_0000097221" description="Meiotic recombination protein rec11">
    <location>
        <begin position="1"/>
        <end position="923"/>
    </location>
</feature>
<feature type="domain" description="SCD" evidence="1">
    <location>
        <begin position="278"/>
        <end position="365"/>
    </location>
</feature>
<evidence type="ECO:0000255" key="1">
    <source>
        <dbReference type="PROSITE-ProRule" id="PRU00750"/>
    </source>
</evidence>
<gene>
    <name type="primary">rec11</name>
    <name type="ORF">SPCC4E9.01c</name>
    <name type="ORF">SPCC550.16c</name>
</gene>
<accession>Q92380</accession>
<accession>Q7LL03</accession>
<accession>Q9USJ0</accession>
<name>REC11_SCHPO</name>